<organism>
    <name type="scientific">Xenopus laevis</name>
    <name type="common">African clawed frog</name>
    <dbReference type="NCBI Taxonomy" id="8355"/>
    <lineage>
        <taxon>Eukaryota</taxon>
        <taxon>Metazoa</taxon>
        <taxon>Chordata</taxon>
        <taxon>Craniata</taxon>
        <taxon>Vertebrata</taxon>
        <taxon>Euteleostomi</taxon>
        <taxon>Amphibia</taxon>
        <taxon>Batrachia</taxon>
        <taxon>Anura</taxon>
        <taxon>Pipoidea</taxon>
        <taxon>Pipidae</taxon>
        <taxon>Xenopodinae</taxon>
        <taxon>Xenopus</taxon>
        <taxon>Xenopus</taxon>
    </lineage>
</organism>
<comment type="function">
    <text evidence="1">Toll-like receptor (TLR)-specific co-chaperone for HSP90B1. Required for proper TLR folding and hence controls TLR exit from the endoplasmic reticulum. Consequently, required for immune responses (By similarity).</text>
</comment>
<comment type="subcellular location">
    <subcellularLocation>
        <location evidence="1">Endoplasmic reticulum</location>
    </subcellularLocation>
</comment>
<comment type="similarity">
    <text evidence="4">Belongs to the canopy family.</text>
</comment>
<comment type="sequence caution" evidence="4">
    <conflict type="erroneous initiation">
        <sequence resource="EMBL-CDS" id="AAH73680"/>
    </conflict>
</comment>
<feature type="signal peptide" evidence="2">
    <location>
        <begin position="1"/>
        <end position="15"/>
    </location>
</feature>
<feature type="chain" id="PRO_0000313784" description="Protein canopy homolog 3">
    <location>
        <begin position="16"/>
        <end position="243"/>
    </location>
</feature>
<feature type="domain" description="Saposin B-type">
    <location>
        <begin position="27"/>
        <end position="236"/>
    </location>
</feature>
<feature type="region of interest" description="Disordered" evidence="3">
    <location>
        <begin position="186"/>
        <end position="243"/>
    </location>
</feature>
<feature type="coiled-coil region" evidence="2">
    <location>
        <begin position="136"/>
        <end position="160"/>
    </location>
</feature>
<feature type="compositionally biased region" description="Basic and acidic residues" evidence="3">
    <location>
        <begin position="226"/>
        <end position="243"/>
    </location>
</feature>
<feature type="disulfide bond" evidence="1">
    <location>
        <begin position="29"/>
        <end position="188"/>
    </location>
</feature>
<feature type="disulfide bond" evidence="1">
    <location>
        <begin position="32"/>
        <end position="176"/>
    </location>
</feature>
<feature type="disulfide bond" evidence="1">
    <location>
        <begin position="86"/>
        <end position="148"/>
    </location>
</feature>
<accession>Q6GN40</accession>
<proteinExistence type="evidence at transcript level"/>
<protein>
    <recommendedName>
        <fullName>Protein canopy homolog 3</fullName>
    </recommendedName>
</protein>
<gene>
    <name type="primary">cnpy3</name>
</gene>
<sequence>MWFLFLLLPLWAGCAEPGDSEWVHLPSKCEVCKYVALELKSSFDETSRTRELIDTRYGFLEDDKKKKKIKYTTSDIRLIEVTEGLCSRLLEYNLHKERTGSNRFAKGMSETFQTLHHLVHKGVKVVMDIPYELWNETSAEVADMKKQCDVMMENYEEVIEDWYRNHQDEDLSEFLCARHVLKGQDQSCLSEQGDSRKGDTGPSTGTKKQKKQGEKKNKSKKQNSGSKEEKKQMDQPMAAKEEL</sequence>
<keyword id="KW-0143">Chaperone</keyword>
<keyword id="KW-0175">Coiled coil</keyword>
<keyword id="KW-1015">Disulfide bond</keyword>
<keyword id="KW-0256">Endoplasmic reticulum</keyword>
<keyword id="KW-0391">Immunity</keyword>
<keyword id="KW-0399">Innate immunity</keyword>
<keyword id="KW-1185">Reference proteome</keyword>
<keyword id="KW-0732">Signal</keyword>
<evidence type="ECO:0000250" key="1"/>
<evidence type="ECO:0000255" key="2"/>
<evidence type="ECO:0000256" key="3">
    <source>
        <dbReference type="SAM" id="MobiDB-lite"/>
    </source>
</evidence>
<evidence type="ECO:0000305" key="4"/>
<name>CNPY3_XENLA</name>
<reference key="1">
    <citation type="submission" date="2004-06" db="EMBL/GenBank/DDBJ databases">
        <authorList>
            <consortium name="NIH - Xenopus Gene Collection (XGC) project"/>
        </authorList>
    </citation>
    <scope>NUCLEOTIDE SEQUENCE [LARGE SCALE MRNA]</scope>
    <source>
        <tissue>Embryo</tissue>
    </source>
</reference>
<dbReference type="EMBL" id="BC073680">
    <property type="protein sequence ID" value="AAH73680.1"/>
    <property type="status" value="ALT_INIT"/>
    <property type="molecule type" value="mRNA"/>
</dbReference>
<dbReference type="GeneID" id="443685"/>
<dbReference type="KEGG" id="xla:443685"/>
<dbReference type="AGR" id="Xenbase:XB-GENE-6251984"/>
<dbReference type="CTD" id="443685"/>
<dbReference type="Xenbase" id="XB-GENE-6251984">
    <property type="gene designation" value="cnpy3.L"/>
</dbReference>
<dbReference type="OMA" id="GQDKACL"/>
<dbReference type="OrthoDB" id="6020060at2759"/>
<dbReference type="Proteomes" id="UP000186698">
    <property type="component" value="Chromosome 5L"/>
</dbReference>
<dbReference type="Bgee" id="443685">
    <property type="expression patterns" value="Expressed in gastrula and 19 other cell types or tissues"/>
</dbReference>
<dbReference type="GO" id="GO:0005783">
    <property type="term" value="C:endoplasmic reticulum"/>
    <property type="evidence" value="ECO:0007669"/>
    <property type="project" value="UniProtKB-SubCell"/>
</dbReference>
<dbReference type="GO" id="GO:0045087">
    <property type="term" value="P:innate immune response"/>
    <property type="evidence" value="ECO:0007669"/>
    <property type="project" value="UniProtKB-KW"/>
</dbReference>
<dbReference type="InterPro" id="IPR021852">
    <property type="entry name" value="DUF3456"/>
</dbReference>
<dbReference type="PANTHER" id="PTHR15382">
    <property type="entry name" value="CTG4A-RELATED"/>
    <property type="match status" value="1"/>
</dbReference>
<dbReference type="PANTHER" id="PTHR15382:SF2">
    <property type="entry name" value="PROTEIN CANOPY HOMOLOG 3"/>
    <property type="match status" value="1"/>
</dbReference>
<dbReference type="Pfam" id="PF11938">
    <property type="entry name" value="DUF3456"/>
    <property type="match status" value="1"/>
</dbReference>